<organism>
    <name type="scientific">Cyanidioschyzon merolae (strain NIES-3377 / 10D)</name>
    <name type="common">Unicellular red alga</name>
    <dbReference type="NCBI Taxonomy" id="280699"/>
    <lineage>
        <taxon>Eukaryota</taxon>
        <taxon>Rhodophyta</taxon>
        <taxon>Bangiophyceae</taxon>
        <taxon>Cyanidiales</taxon>
        <taxon>Cyanidiaceae</taxon>
        <taxon>Cyanidioschyzon</taxon>
    </lineage>
</organism>
<evidence type="ECO:0000305" key="1"/>
<sequence>MMKIQQLLEAGVHLGHQAKRWNPKMLPYLYTQRMGIHIIDLVQTAHLLNQACETLTVQVSEGKRVLFVGTKPQASVVVEEEATRCGEFFINQRWLGGLLTNWTTVQSRLKRWRELLEADMDHLTKKEASALRRELNQLNRQMRGIQNMDQIPDIVIVVDPNKENTAVLECHKLGILTIGIVDTNADPESVDLAIPANDDAIASLQLILSCLADAILKGKSI</sequence>
<gene>
    <name type="primary">rps2</name>
</gene>
<name>RR2_CYAM1</name>
<protein>
    <recommendedName>
        <fullName evidence="1">Small ribosomal subunit protein uS2c</fullName>
    </recommendedName>
    <alternativeName>
        <fullName>30S ribosomal protein S2, chloroplastic</fullName>
    </alternativeName>
</protein>
<dbReference type="EMBL" id="AB002583">
    <property type="protein sequence ID" value="BAC76280.1"/>
    <property type="molecule type" value="Genomic_DNA"/>
</dbReference>
<dbReference type="RefSeq" id="NP_849118.1">
    <property type="nucleotide sequence ID" value="NC_004799.1"/>
</dbReference>
<dbReference type="SMR" id="Q85FR5"/>
<dbReference type="STRING" id="280699.Q85FR5"/>
<dbReference type="EnsemblPlants" id="CMV218CT">
    <property type="protein sequence ID" value="CMV218CT"/>
    <property type="gene ID" value="CMV218C"/>
</dbReference>
<dbReference type="GeneID" id="845008"/>
<dbReference type="Gramene" id="CMV218CT">
    <property type="protein sequence ID" value="CMV218CT"/>
    <property type="gene ID" value="CMV218C"/>
</dbReference>
<dbReference type="KEGG" id="cme:CymeCp186"/>
<dbReference type="eggNOG" id="KOG0832">
    <property type="taxonomic scope" value="Eukaryota"/>
</dbReference>
<dbReference type="HOGENOM" id="CLU_040318_1_2_1"/>
<dbReference type="Proteomes" id="UP000007014">
    <property type="component" value="Chloroplast"/>
</dbReference>
<dbReference type="GO" id="GO:0009507">
    <property type="term" value="C:chloroplast"/>
    <property type="evidence" value="ECO:0007669"/>
    <property type="project" value="UniProtKB-SubCell"/>
</dbReference>
<dbReference type="GO" id="GO:0005763">
    <property type="term" value="C:mitochondrial small ribosomal subunit"/>
    <property type="evidence" value="ECO:0007669"/>
    <property type="project" value="TreeGrafter"/>
</dbReference>
<dbReference type="GO" id="GO:0003729">
    <property type="term" value="F:mRNA binding"/>
    <property type="evidence" value="ECO:0007669"/>
    <property type="project" value="EnsemblPlants"/>
</dbReference>
<dbReference type="GO" id="GO:0003735">
    <property type="term" value="F:structural constituent of ribosome"/>
    <property type="evidence" value="ECO:0007669"/>
    <property type="project" value="InterPro"/>
</dbReference>
<dbReference type="GO" id="GO:0006412">
    <property type="term" value="P:translation"/>
    <property type="evidence" value="ECO:0007669"/>
    <property type="project" value="UniProtKB-UniRule"/>
</dbReference>
<dbReference type="CDD" id="cd01425">
    <property type="entry name" value="RPS2"/>
    <property type="match status" value="1"/>
</dbReference>
<dbReference type="Gene3D" id="3.40.50.10490">
    <property type="entry name" value="Glucose-6-phosphate isomerase like protein, domain 1"/>
    <property type="match status" value="1"/>
</dbReference>
<dbReference type="Gene3D" id="1.10.287.610">
    <property type="entry name" value="Helix hairpin bin"/>
    <property type="match status" value="1"/>
</dbReference>
<dbReference type="HAMAP" id="MF_00291_B">
    <property type="entry name" value="Ribosomal_uS2_B"/>
    <property type="match status" value="1"/>
</dbReference>
<dbReference type="InterPro" id="IPR001865">
    <property type="entry name" value="Ribosomal_uS2"/>
</dbReference>
<dbReference type="InterPro" id="IPR005706">
    <property type="entry name" value="Ribosomal_uS2_bac/mit/plastid"/>
</dbReference>
<dbReference type="InterPro" id="IPR018130">
    <property type="entry name" value="Ribosomal_uS2_CS"/>
</dbReference>
<dbReference type="InterPro" id="IPR023591">
    <property type="entry name" value="Ribosomal_uS2_flav_dom_sf"/>
</dbReference>
<dbReference type="NCBIfam" id="TIGR01011">
    <property type="entry name" value="rpsB_bact"/>
    <property type="match status" value="1"/>
</dbReference>
<dbReference type="PANTHER" id="PTHR12534">
    <property type="entry name" value="30S RIBOSOMAL PROTEIN S2 PROKARYOTIC AND ORGANELLAR"/>
    <property type="match status" value="1"/>
</dbReference>
<dbReference type="PANTHER" id="PTHR12534:SF0">
    <property type="entry name" value="SMALL RIBOSOMAL SUBUNIT PROTEIN US2M"/>
    <property type="match status" value="1"/>
</dbReference>
<dbReference type="Pfam" id="PF00318">
    <property type="entry name" value="Ribosomal_S2"/>
    <property type="match status" value="1"/>
</dbReference>
<dbReference type="PRINTS" id="PR00395">
    <property type="entry name" value="RIBOSOMALS2"/>
</dbReference>
<dbReference type="SUPFAM" id="SSF52313">
    <property type="entry name" value="Ribosomal protein S2"/>
    <property type="match status" value="1"/>
</dbReference>
<dbReference type="PROSITE" id="PS00962">
    <property type="entry name" value="RIBOSOMAL_S2_1"/>
    <property type="match status" value="1"/>
</dbReference>
<proteinExistence type="inferred from homology"/>
<accession>Q85FR5</accession>
<geneLocation type="chloroplast"/>
<keyword id="KW-0150">Chloroplast</keyword>
<keyword id="KW-0934">Plastid</keyword>
<keyword id="KW-1185">Reference proteome</keyword>
<keyword id="KW-0687">Ribonucleoprotein</keyword>
<keyword id="KW-0689">Ribosomal protein</keyword>
<reference key="1">
    <citation type="journal article" date="2003" name="DNA Res.">
        <title>Complete sequence and analysis of the plastid genome of the unicellular red alga Cyanidioschyzon merolae.</title>
        <authorList>
            <person name="Ohta N."/>
            <person name="Matsuzaki M."/>
            <person name="Misumi O."/>
            <person name="Miyagishima S.-Y."/>
            <person name="Nozaki H."/>
            <person name="Tanaka K."/>
            <person name="Shin-i T."/>
            <person name="Kohara Y."/>
            <person name="Kuroiwa T."/>
        </authorList>
    </citation>
    <scope>NUCLEOTIDE SEQUENCE [LARGE SCALE GENOMIC DNA]</scope>
    <source>
        <strain>NIES-3377 / 10D</strain>
    </source>
</reference>
<comment type="subcellular location">
    <subcellularLocation>
        <location>Plastid</location>
        <location>Chloroplast</location>
    </subcellularLocation>
</comment>
<comment type="similarity">
    <text evidence="1">Belongs to the universal ribosomal protein uS2 family.</text>
</comment>
<feature type="chain" id="PRO_0000352168" description="Small ribosomal subunit protein uS2c">
    <location>
        <begin position="1"/>
        <end position="221"/>
    </location>
</feature>